<comment type="function">
    <text evidence="1">Catalyzes the transfer of a phosphate group to glutamate to form L-glutamate 5-phosphate.</text>
</comment>
<comment type="catalytic activity">
    <reaction evidence="1">
        <text>L-glutamate + ATP = L-glutamyl 5-phosphate + ADP</text>
        <dbReference type="Rhea" id="RHEA:14877"/>
        <dbReference type="ChEBI" id="CHEBI:29985"/>
        <dbReference type="ChEBI" id="CHEBI:30616"/>
        <dbReference type="ChEBI" id="CHEBI:58274"/>
        <dbReference type="ChEBI" id="CHEBI:456216"/>
        <dbReference type="EC" id="2.7.2.11"/>
    </reaction>
</comment>
<comment type="pathway">
    <text evidence="1">Amino-acid biosynthesis; L-proline biosynthesis; L-glutamate 5-semialdehyde from L-glutamate: step 1/2.</text>
</comment>
<comment type="subcellular location">
    <subcellularLocation>
        <location evidence="1">Cytoplasm</location>
    </subcellularLocation>
</comment>
<comment type="similarity">
    <text evidence="1">Belongs to the glutamate 5-kinase family.</text>
</comment>
<sequence length="377" mass="39774">MSLPELKNFRRIVVKVGSSLLIDSAAGEVRATWLAALAADIAALHRDGRDVMVVSSGSIALGRSRLKLPRGPLKLEESQAAAAVGQIALARIWSEVLGAHGIGAGQILVTFQDTEERRRYLNARSTIAKLLEWRAVPVINENDTVATAEIRYGDNDRLAARVATMASADLLILLSDIDGLYTAPPVANPDAELIPVVESVSAEIEAMAGGAESELSRGGMYTKIEAAKIATTAGTHMLIANGKIEHPLQAIADGGRCTWFLTPANPVTARKRWIAGSLEPKGTLTIDAGAVTALRAGKSLLPAGVIRVDGQFARGDAVLVRGPDTHEIGRGLVAYDAEDADKIKGRSSPDVLIILGISGRSEMIHRDDLVIGSVPGV</sequence>
<name>PROB_RHOP5</name>
<dbReference type="EC" id="2.7.2.11" evidence="1"/>
<dbReference type="EMBL" id="CP000463">
    <property type="protein sequence ID" value="ABJ04508.1"/>
    <property type="molecule type" value="Genomic_DNA"/>
</dbReference>
<dbReference type="SMR" id="Q07U76"/>
<dbReference type="STRING" id="316055.RPE_0549"/>
<dbReference type="KEGG" id="rpe:RPE_0549"/>
<dbReference type="eggNOG" id="COG0263">
    <property type="taxonomic scope" value="Bacteria"/>
</dbReference>
<dbReference type="HOGENOM" id="CLU_025400_2_0_5"/>
<dbReference type="OrthoDB" id="9804434at2"/>
<dbReference type="UniPathway" id="UPA00098">
    <property type="reaction ID" value="UER00359"/>
</dbReference>
<dbReference type="GO" id="GO:0005829">
    <property type="term" value="C:cytosol"/>
    <property type="evidence" value="ECO:0007669"/>
    <property type="project" value="TreeGrafter"/>
</dbReference>
<dbReference type="GO" id="GO:0005524">
    <property type="term" value="F:ATP binding"/>
    <property type="evidence" value="ECO:0007669"/>
    <property type="project" value="UniProtKB-KW"/>
</dbReference>
<dbReference type="GO" id="GO:0004349">
    <property type="term" value="F:glutamate 5-kinase activity"/>
    <property type="evidence" value="ECO:0007669"/>
    <property type="project" value="UniProtKB-UniRule"/>
</dbReference>
<dbReference type="GO" id="GO:0003723">
    <property type="term" value="F:RNA binding"/>
    <property type="evidence" value="ECO:0007669"/>
    <property type="project" value="InterPro"/>
</dbReference>
<dbReference type="GO" id="GO:0055129">
    <property type="term" value="P:L-proline biosynthetic process"/>
    <property type="evidence" value="ECO:0007669"/>
    <property type="project" value="UniProtKB-UniRule"/>
</dbReference>
<dbReference type="CDD" id="cd04242">
    <property type="entry name" value="AAK_G5K_ProB"/>
    <property type="match status" value="1"/>
</dbReference>
<dbReference type="CDD" id="cd21157">
    <property type="entry name" value="PUA_G5K"/>
    <property type="match status" value="1"/>
</dbReference>
<dbReference type="FunFam" id="2.30.130.10:FF:000007">
    <property type="entry name" value="Glutamate 5-kinase"/>
    <property type="match status" value="1"/>
</dbReference>
<dbReference type="FunFam" id="3.40.1160.10:FF:000018">
    <property type="entry name" value="Glutamate 5-kinase"/>
    <property type="match status" value="1"/>
</dbReference>
<dbReference type="Gene3D" id="3.40.1160.10">
    <property type="entry name" value="Acetylglutamate kinase-like"/>
    <property type="match status" value="2"/>
</dbReference>
<dbReference type="Gene3D" id="2.30.130.10">
    <property type="entry name" value="PUA domain"/>
    <property type="match status" value="1"/>
</dbReference>
<dbReference type="HAMAP" id="MF_00456">
    <property type="entry name" value="ProB"/>
    <property type="match status" value="1"/>
</dbReference>
<dbReference type="InterPro" id="IPR036393">
    <property type="entry name" value="AceGlu_kinase-like_sf"/>
</dbReference>
<dbReference type="InterPro" id="IPR001048">
    <property type="entry name" value="Asp/Glu/Uridylate_kinase"/>
</dbReference>
<dbReference type="InterPro" id="IPR041739">
    <property type="entry name" value="G5K_ProB"/>
</dbReference>
<dbReference type="InterPro" id="IPR001057">
    <property type="entry name" value="Glu/AcGlu_kinase"/>
</dbReference>
<dbReference type="InterPro" id="IPR011529">
    <property type="entry name" value="Glu_5kinase"/>
</dbReference>
<dbReference type="InterPro" id="IPR005715">
    <property type="entry name" value="Glu_5kinase/COase_Synthase"/>
</dbReference>
<dbReference type="InterPro" id="IPR019797">
    <property type="entry name" value="Glutamate_5-kinase_CS"/>
</dbReference>
<dbReference type="InterPro" id="IPR002478">
    <property type="entry name" value="PUA"/>
</dbReference>
<dbReference type="InterPro" id="IPR015947">
    <property type="entry name" value="PUA-like_sf"/>
</dbReference>
<dbReference type="InterPro" id="IPR036974">
    <property type="entry name" value="PUA_sf"/>
</dbReference>
<dbReference type="NCBIfam" id="TIGR01027">
    <property type="entry name" value="proB"/>
    <property type="match status" value="1"/>
</dbReference>
<dbReference type="PANTHER" id="PTHR43654">
    <property type="entry name" value="GLUTAMATE 5-KINASE"/>
    <property type="match status" value="1"/>
</dbReference>
<dbReference type="PANTHER" id="PTHR43654:SF1">
    <property type="entry name" value="ISOPENTENYL PHOSPHATE KINASE"/>
    <property type="match status" value="1"/>
</dbReference>
<dbReference type="Pfam" id="PF00696">
    <property type="entry name" value="AA_kinase"/>
    <property type="match status" value="1"/>
</dbReference>
<dbReference type="Pfam" id="PF01472">
    <property type="entry name" value="PUA"/>
    <property type="match status" value="1"/>
</dbReference>
<dbReference type="PIRSF" id="PIRSF000729">
    <property type="entry name" value="GK"/>
    <property type="match status" value="1"/>
</dbReference>
<dbReference type="PRINTS" id="PR00474">
    <property type="entry name" value="GLU5KINASE"/>
</dbReference>
<dbReference type="SMART" id="SM00359">
    <property type="entry name" value="PUA"/>
    <property type="match status" value="1"/>
</dbReference>
<dbReference type="SUPFAM" id="SSF53633">
    <property type="entry name" value="Carbamate kinase-like"/>
    <property type="match status" value="1"/>
</dbReference>
<dbReference type="SUPFAM" id="SSF88697">
    <property type="entry name" value="PUA domain-like"/>
    <property type="match status" value="1"/>
</dbReference>
<dbReference type="PROSITE" id="PS00902">
    <property type="entry name" value="GLUTAMATE_5_KINASE"/>
    <property type="match status" value="1"/>
</dbReference>
<dbReference type="PROSITE" id="PS50890">
    <property type="entry name" value="PUA"/>
    <property type="match status" value="1"/>
</dbReference>
<protein>
    <recommendedName>
        <fullName evidence="1">Glutamate 5-kinase</fullName>
        <ecNumber evidence="1">2.7.2.11</ecNumber>
    </recommendedName>
    <alternativeName>
        <fullName evidence="1">Gamma-glutamyl kinase</fullName>
        <shortName evidence="1">GK</shortName>
    </alternativeName>
</protein>
<evidence type="ECO:0000255" key="1">
    <source>
        <dbReference type="HAMAP-Rule" id="MF_00456"/>
    </source>
</evidence>
<accession>Q07U76</accession>
<feature type="chain" id="PRO_1000081099" description="Glutamate 5-kinase">
    <location>
        <begin position="1"/>
        <end position="377"/>
    </location>
</feature>
<feature type="domain" description="PUA" evidence="1">
    <location>
        <begin position="281"/>
        <end position="358"/>
    </location>
</feature>
<feature type="binding site" evidence="1">
    <location>
        <position position="15"/>
    </location>
    <ligand>
        <name>ATP</name>
        <dbReference type="ChEBI" id="CHEBI:30616"/>
    </ligand>
</feature>
<feature type="binding site" evidence="1">
    <location>
        <position position="56"/>
    </location>
    <ligand>
        <name>substrate</name>
    </ligand>
</feature>
<feature type="binding site" evidence="1">
    <location>
        <position position="143"/>
    </location>
    <ligand>
        <name>substrate</name>
    </ligand>
</feature>
<feature type="binding site" evidence="1">
    <location>
        <position position="155"/>
    </location>
    <ligand>
        <name>substrate</name>
    </ligand>
</feature>
<feature type="binding site" evidence="1">
    <location>
        <begin position="175"/>
        <end position="176"/>
    </location>
    <ligand>
        <name>ATP</name>
        <dbReference type="ChEBI" id="CHEBI:30616"/>
    </ligand>
</feature>
<gene>
    <name evidence="1" type="primary">proB</name>
    <name type="ordered locus">RPE_0549</name>
</gene>
<organism>
    <name type="scientific">Rhodopseudomonas palustris (strain BisA53)</name>
    <dbReference type="NCBI Taxonomy" id="316055"/>
    <lineage>
        <taxon>Bacteria</taxon>
        <taxon>Pseudomonadati</taxon>
        <taxon>Pseudomonadota</taxon>
        <taxon>Alphaproteobacteria</taxon>
        <taxon>Hyphomicrobiales</taxon>
        <taxon>Nitrobacteraceae</taxon>
        <taxon>Rhodopseudomonas</taxon>
    </lineage>
</organism>
<keyword id="KW-0028">Amino-acid biosynthesis</keyword>
<keyword id="KW-0067">ATP-binding</keyword>
<keyword id="KW-0963">Cytoplasm</keyword>
<keyword id="KW-0418">Kinase</keyword>
<keyword id="KW-0547">Nucleotide-binding</keyword>
<keyword id="KW-0641">Proline biosynthesis</keyword>
<keyword id="KW-0808">Transferase</keyword>
<reference key="1">
    <citation type="submission" date="2006-09" db="EMBL/GenBank/DDBJ databases">
        <title>Complete sequence of Rhodopseudomonas palustris BisA53.</title>
        <authorList>
            <consortium name="US DOE Joint Genome Institute"/>
            <person name="Copeland A."/>
            <person name="Lucas S."/>
            <person name="Lapidus A."/>
            <person name="Barry K."/>
            <person name="Detter J.C."/>
            <person name="Glavina del Rio T."/>
            <person name="Hammon N."/>
            <person name="Israni S."/>
            <person name="Dalin E."/>
            <person name="Tice H."/>
            <person name="Pitluck S."/>
            <person name="Chain P."/>
            <person name="Malfatti S."/>
            <person name="Shin M."/>
            <person name="Vergez L."/>
            <person name="Schmutz J."/>
            <person name="Larimer F."/>
            <person name="Land M."/>
            <person name="Hauser L."/>
            <person name="Pelletier D.A."/>
            <person name="Kyrpides N."/>
            <person name="Kim E."/>
            <person name="Harwood C.S."/>
            <person name="Oda Y."/>
            <person name="Richardson P."/>
        </authorList>
    </citation>
    <scope>NUCLEOTIDE SEQUENCE [LARGE SCALE GENOMIC DNA]</scope>
    <source>
        <strain>BisA53</strain>
    </source>
</reference>
<proteinExistence type="inferred from homology"/>